<comment type="function">
    <text evidence="1">Involved in transcription antitermination. Required for transcription of ribosomal RNA (rRNA) genes. Binds specifically to the boxA antiterminator sequence of the ribosomal RNA (rrn) operons.</text>
</comment>
<comment type="similarity">
    <text evidence="1">Belongs to the NusB family.</text>
</comment>
<sequence length="145" mass="16816">MKMKPAERRRARQSAVQAIYQWQITKLSAGQIIEQFSTDQDLSKTDVPYFKELLTGVIHRVDFLDEKLSPYLSRKIEDVDMVDKAVLRLAMFELTQRTDIPHKVVLNEAIELAKDFATDESYKFVNGVLDKALRSLKLREEEQGK</sequence>
<proteinExistence type="inferred from homology"/>
<dbReference type="EMBL" id="CP000510">
    <property type="protein sequence ID" value="ABM03261.1"/>
    <property type="molecule type" value="Genomic_DNA"/>
</dbReference>
<dbReference type="SMR" id="A1SUU6"/>
<dbReference type="STRING" id="357804.Ping_1444"/>
<dbReference type="KEGG" id="pin:Ping_1444"/>
<dbReference type="eggNOG" id="COG0781">
    <property type="taxonomic scope" value="Bacteria"/>
</dbReference>
<dbReference type="HOGENOM" id="CLU_087843_4_1_6"/>
<dbReference type="OrthoDB" id="9789556at2"/>
<dbReference type="Proteomes" id="UP000000639">
    <property type="component" value="Chromosome"/>
</dbReference>
<dbReference type="GO" id="GO:0005829">
    <property type="term" value="C:cytosol"/>
    <property type="evidence" value="ECO:0007669"/>
    <property type="project" value="TreeGrafter"/>
</dbReference>
<dbReference type="GO" id="GO:0003723">
    <property type="term" value="F:RNA binding"/>
    <property type="evidence" value="ECO:0007669"/>
    <property type="project" value="UniProtKB-UniRule"/>
</dbReference>
<dbReference type="GO" id="GO:0006353">
    <property type="term" value="P:DNA-templated transcription termination"/>
    <property type="evidence" value="ECO:0007669"/>
    <property type="project" value="UniProtKB-UniRule"/>
</dbReference>
<dbReference type="GO" id="GO:0031564">
    <property type="term" value="P:transcription antitermination"/>
    <property type="evidence" value="ECO:0007669"/>
    <property type="project" value="UniProtKB-KW"/>
</dbReference>
<dbReference type="CDD" id="cd00619">
    <property type="entry name" value="Terminator_NusB"/>
    <property type="match status" value="1"/>
</dbReference>
<dbReference type="FunFam" id="1.10.940.10:FF:000001">
    <property type="entry name" value="Transcription antitermination factor NusB"/>
    <property type="match status" value="1"/>
</dbReference>
<dbReference type="Gene3D" id="1.10.940.10">
    <property type="entry name" value="NusB-like"/>
    <property type="match status" value="1"/>
</dbReference>
<dbReference type="HAMAP" id="MF_00073">
    <property type="entry name" value="NusB"/>
    <property type="match status" value="1"/>
</dbReference>
<dbReference type="InterPro" id="IPR035926">
    <property type="entry name" value="NusB-like_sf"/>
</dbReference>
<dbReference type="InterPro" id="IPR011605">
    <property type="entry name" value="NusB_fam"/>
</dbReference>
<dbReference type="InterPro" id="IPR006027">
    <property type="entry name" value="NusB_RsmB_TIM44"/>
</dbReference>
<dbReference type="NCBIfam" id="TIGR01951">
    <property type="entry name" value="nusB"/>
    <property type="match status" value="1"/>
</dbReference>
<dbReference type="PANTHER" id="PTHR11078:SF3">
    <property type="entry name" value="ANTITERMINATION NUSB DOMAIN-CONTAINING PROTEIN"/>
    <property type="match status" value="1"/>
</dbReference>
<dbReference type="PANTHER" id="PTHR11078">
    <property type="entry name" value="N UTILIZATION SUBSTANCE PROTEIN B-RELATED"/>
    <property type="match status" value="1"/>
</dbReference>
<dbReference type="Pfam" id="PF01029">
    <property type="entry name" value="NusB"/>
    <property type="match status" value="1"/>
</dbReference>
<dbReference type="SUPFAM" id="SSF48013">
    <property type="entry name" value="NusB-like"/>
    <property type="match status" value="1"/>
</dbReference>
<keyword id="KW-1185">Reference proteome</keyword>
<keyword id="KW-0694">RNA-binding</keyword>
<keyword id="KW-0804">Transcription</keyword>
<keyword id="KW-0889">Transcription antitermination</keyword>
<keyword id="KW-0805">Transcription regulation</keyword>
<name>NUSB_PSYIN</name>
<accession>A1SUU6</accession>
<evidence type="ECO:0000255" key="1">
    <source>
        <dbReference type="HAMAP-Rule" id="MF_00073"/>
    </source>
</evidence>
<feature type="chain" id="PRO_1000092574" description="Transcription antitermination protein NusB">
    <location>
        <begin position="1"/>
        <end position="145"/>
    </location>
</feature>
<gene>
    <name evidence="1" type="primary">nusB</name>
    <name type="ordered locus">Ping_1444</name>
</gene>
<organism>
    <name type="scientific">Psychromonas ingrahamii (strain DSM 17664 / CCUG 51855 / 37)</name>
    <dbReference type="NCBI Taxonomy" id="357804"/>
    <lineage>
        <taxon>Bacteria</taxon>
        <taxon>Pseudomonadati</taxon>
        <taxon>Pseudomonadota</taxon>
        <taxon>Gammaproteobacteria</taxon>
        <taxon>Alteromonadales</taxon>
        <taxon>Psychromonadaceae</taxon>
        <taxon>Psychromonas</taxon>
    </lineage>
</organism>
<reference key="1">
    <citation type="journal article" date="2008" name="BMC Genomics">
        <title>Genomics of an extreme psychrophile, Psychromonas ingrahamii.</title>
        <authorList>
            <person name="Riley M."/>
            <person name="Staley J.T."/>
            <person name="Danchin A."/>
            <person name="Wang T.Z."/>
            <person name="Brettin T.S."/>
            <person name="Hauser L.J."/>
            <person name="Land M.L."/>
            <person name="Thompson L.S."/>
        </authorList>
    </citation>
    <scope>NUCLEOTIDE SEQUENCE [LARGE SCALE GENOMIC DNA]</scope>
    <source>
        <strain>DSM 17664 / CCUG 51855 / 37</strain>
    </source>
</reference>
<protein>
    <recommendedName>
        <fullName evidence="1">Transcription antitermination protein NusB</fullName>
    </recommendedName>
    <alternativeName>
        <fullName evidence="1">Antitermination factor NusB</fullName>
    </alternativeName>
</protein>